<comment type="function">
    <text evidence="2">Microtubule inner protein involved in the attachment of outer dynein arms (ODAs) to dynein-decorated doublet microtubules (DMTs) in cilia axoneme, which is required for motile cilia beating. Functions at the initial step of left-right asymmetry specification of the visceral organs.</text>
</comment>
<comment type="subcellular location">
    <subcellularLocation>
        <location evidence="1">Cytoplasm</location>
        <location evidence="1">Cytoskeleton</location>
        <location evidence="1">Cilium axoneme</location>
    </subcellularLocation>
</comment>
<comment type="similarity">
    <text evidence="3">Belongs to the PIERCE1 family.</text>
</comment>
<organism>
    <name type="scientific">Salmo salar</name>
    <name type="common">Atlantic salmon</name>
    <dbReference type="NCBI Taxonomy" id="8030"/>
    <lineage>
        <taxon>Eukaryota</taxon>
        <taxon>Metazoa</taxon>
        <taxon>Chordata</taxon>
        <taxon>Craniata</taxon>
        <taxon>Vertebrata</taxon>
        <taxon>Euteleostomi</taxon>
        <taxon>Actinopterygii</taxon>
        <taxon>Neopterygii</taxon>
        <taxon>Teleostei</taxon>
        <taxon>Protacanthopterygii</taxon>
        <taxon>Salmoniformes</taxon>
        <taxon>Salmonidae</taxon>
        <taxon>Salmoninae</taxon>
        <taxon>Salmo</taxon>
    </lineage>
</organism>
<dbReference type="EMBL" id="BT046249">
    <property type="protein sequence ID" value="ACI66050.1"/>
    <property type="molecule type" value="mRNA"/>
</dbReference>
<dbReference type="SMR" id="B5X5D0"/>
<dbReference type="STRING" id="8030.ENSSSAP00000078825"/>
<dbReference type="PaxDb" id="8030-ENSSSAP00000078825"/>
<dbReference type="KEGG" id="sasa:100195552"/>
<dbReference type="CTD" id="100195552"/>
<dbReference type="OrthoDB" id="183672at7898"/>
<dbReference type="Proteomes" id="UP000087266">
    <property type="component" value="Chromosome ssa24"/>
</dbReference>
<dbReference type="GO" id="GO:0005879">
    <property type="term" value="C:axonemal microtubule"/>
    <property type="evidence" value="ECO:0000250"/>
    <property type="project" value="UniProtKB"/>
</dbReference>
<dbReference type="GO" id="GO:0005737">
    <property type="term" value="C:cytoplasm"/>
    <property type="evidence" value="ECO:0000250"/>
    <property type="project" value="UniProtKB"/>
</dbReference>
<dbReference type="GO" id="GO:0005634">
    <property type="term" value="C:nucleus"/>
    <property type="evidence" value="ECO:0000250"/>
    <property type="project" value="UniProtKB"/>
</dbReference>
<dbReference type="GO" id="GO:0035082">
    <property type="term" value="P:axoneme assembly"/>
    <property type="evidence" value="ECO:0000250"/>
    <property type="project" value="UniProtKB"/>
</dbReference>
<dbReference type="GO" id="GO:0003341">
    <property type="term" value="P:cilium movement"/>
    <property type="evidence" value="ECO:0000250"/>
    <property type="project" value="UniProtKB"/>
</dbReference>
<dbReference type="GO" id="GO:0007368">
    <property type="term" value="P:determination of left/right symmetry"/>
    <property type="evidence" value="ECO:0000250"/>
    <property type="project" value="UniProtKB"/>
</dbReference>
<dbReference type="GO" id="GO:0061966">
    <property type="term" value="P:establishment of left/right asymmetry"/>
    <property type="evidence" value="ECO:0000250"/>
    <property type="project" value="UniProtKB"/>
</dbReference>
<dbReference type="InterPro" id="IPR026507">
    <property type="entry name" value="PIRC1/2"/>
</dbReference>
<dbReference type="PANTHER" id="PTHR20899">
    <property type="entry name" value="PIERCE HOMOLOG"/>
    <property type="match status" value="1"/>
</dbReference>
<dbReference type="PANTHER" id="PTHR20899:SF1">
    <property type="entry name" value="PIERCER OF MICROTUBULE WALL 1 PROTEIN"/>
    <property type="match status" value="1"/>
</dbReference>
<dbReference type="Pfam" id="PF14892">
    <property type="entry name" value="PIRC1_2"/>
    <property type="match status" value="1"/>
</dbReference>
<protein>
    <recommendedName>
        <fullName>Piercer of microtubule wall 1 protein</fullName>
        <shortName>Pierce1</shortName>
    </recommendedName>
    <alternativeName>
        <fullName>UPF0691 protein C9orf116 homolog</fullName>
    </alternativeName>
</protein>
<sequence>MGAGILRVIIMDSENYVETHPSDDNEAMKTSDVYKVDKNLPKRFNNPDCFQGYSTKINHPFYQTSSQIYGSKRPTVHEMPTTFNGSYRKFSEHMLKSGMFRDNGFNTSIEKSKITGHDTIPMFQDRINFNYAYDSGNGPKN</sequence>
<name>PIRC1_SALSA</name>
<accession>B5X5D0</accession>
<keyword id="KW-0966">Cell projection</keyword>
<keyword id="KW-0963">Cytoplasm</keyword>
<keyword id="KW-0206">Cytoskeleton</keyword>
<keyword id="KW-1185">Reference proteome</keyword>
<gene>
    <name type="primary">pierce1</name>
</gene>
<evidence type="ECO:0000250" key="1">
    <source>
        <dbReference type="UniProtKB" id="Q32P67"/>
    </source>
</evidence>
<evidence type="ECO:0000250" key="2">
    <source>
        <dbReference type="UniProtKB" id="Q5BN45"/>
    </source>
</evidence>
<evidence type="ECO:0000305" key="3"/>
<feature type="chain" id="PRO_0000359782" description="Piercer of microtubule wall 1 protein">
    <location>
        <begin position="1"/>
        <end position="141"/>
    </location>
</feature>
<reference key="1">
    <citation type="journal article" date="2010" name="BMC Genomics">
        <title>Salmo salar and Esox lucius full-length cDNA sequences reveal changes in evolutionary pressures on a post-tetraploidization genome.</title>
        <authorList>
            <person name="Leong J.S."/>
            <person name="Jantzen S.G."/>
            <person name="von Schalburg K.R."/>
            <person name="Cooper G.A."/>
            <person name="Messmer A.M."/>
            <person name="Liao N.Y."/>
            <person name="Munro S."/>
            <person name="Moore R."/>
            <person name="Holt R.A."/>
            <person name="Jones S.J."/>
            <person name="Davidson W.S."/>
            <person name="Koop B.F."/>
        </authorList>
    </citation>
    <scope>NUCLEOTIDE SEQUENCE [LARGE SCALE MRNA]</scope>
    <source>
        <tissue>Brain</tissue>
    </source>
</reference>
<proteinExistence type="evidence at transcript level"/>